<reference key="1">
    <citation type="submission" date="2007-10" db="EMBL/GenBank/DDBJ databases">
        <title>Complete sequence of Methanococcus maripaludis C6.</title>
        <authorList>
            <consortium name="US DOE Joint Genome Institute"/>
            <person name="Copeland A."/>
            <person name="Lucas S."/>
            <person name="Lapidus A."/>
            <person name="Barry K."/>
            <person name="Glavina del Rio T."/>
            <person name="Dalin E."/>
            <person name="Tice H."/>
            <person name="Pitluck S."/>
            <person name="Clum A."/>
            <person name="Schmutz J."/>
            <person name="Larimer F."/>
            <person name="Land M."/>
            <person name="Hauser L."/>
            <person name="Kyrpides N."/>
            <person name="Mikhailova N."/>
            <person name="Sieprawska-Lupa M."/>
            <person name="Whitman W.B."/>
            <person name="Richardson P."/>
        </authorList>
    </citation>
    <scope>NUCLEOTIDE SEQUENCE [LARGE SCALE GENOMIC DNA]</scope>
    <source>
        <strain>C6 / ATCC BAA-1332</strain>
    </source>
</reference>
<evidence type="ECO:0000255" key="1">
    <source>
        <dbReference type="HAMAP-Rule" id="MF_00012"/>
    </source>
</evidence>
<name>ILVD_METM6</name>
<keyword id="KW-0001">2Fe-2S</keyword>
<keyword id="KW-0028">Amino-acid biosynthesis</keyword>
<keyword id="KW-0100">Branched-chain amino acid biosynthesis</keyword>
<keyword id="KW-0408">Iron</keyword>
<keyword id="KW-0411">Iron-sulfur</keyword>
<keyword id="KW-0456">Lyase</keyword>
<keyword id="KW-0460">Magnesium</keyword>
<keyword id="KW-0479">Metal-binding</keyword>
<sequence>MISDNVKKGVIRSPNRALLKACGYSDEDMEKPFIGVVNSFTEVVPGHIHLKTLSDVVKHGVYANGGTPFEFNTIGICDGIAMGHEGMKYSLPSREIIADAVESMARAHGFDGLVLIPTCDKIVPGMIMGALRLNIPFIVVTGGPMLPGEFQGKKYELISLFEGVGEYQVGKITEEELRCIEDCACPGAGSCAGLYTANSMACLTEALGLSLPMCATTHAIDAQKVRLAKKSGSKIVNMVKEDLKPTDILTKEAFENAILVDLALGGSTNTTLHIPAIANEIENKFITLDDFDRLSDEVPHIASIKPGGNHYMIDLHNAGGIPAVFNVLKEKIRNTKTVDGRSTLEIAESVKYINYNVIRKVEAPVHETAGLRVLKGNLAPNGCVVKIGAVNPKMHKHEGPAKVYNSEDEAISAILGGEIVKGDVVVIRYEGPSGGPGMREMLSPTSAICGMGLDDSVALITDGRFSGGSRGPCIGHVSPEAAAGGVIAAIENGDIIKIDMIGKEINVDLDESVIKERLSKLGEFEPKIKKGYLSRYSRLVSSADEGAVLK</sequence>
<protein>
    <recommendedName>
        <fullName evidence="1">Dihydroxy-acid dehydratase</fullName>
        <shortName evidence="1">DAD</shortName>
        <ecNumber evidence="1">4.2.1.9</ecNumber>
    </recommendedName>
</protein>
<organism>
    <name type="scientific">Methanococcus maripaludis (strain C6 / ATCC BAA-1332)</name>
    <dbReference type="NCBI Taxonomy" id="444158"/>
    <lineage>
        <taxon>Archaea</taxon>
        <taxon>Methanobacteriati</taxon>
        <taxon>Methanobacteriota</taxon>
        <taxon>Methanomada group</taxon>
        <taxon>Methanococci</taxon>
        <taxon>Methanococcales</taxon>
        <taxon>Methanococcaceae</taxon>
        <taxon>Methanococcus</taxon>
    </lineage>
</organism>
<feature type="chain" id="PRO_1000089395" description="Dihydroxy-acid dehydratase">
    <location>
        <begin position="1"/>
        <end position="550"/>
    </location>
</feature>
<feature type="active site" description="Proton acceptor" evidence="1">
    <location>
        <position position="466"/>
    </location>
</feature>
<feature type="binding site" evidence="1">
    <location>
        <position position="78"/>
    </location>
    <ligand>
        <name>Mg(2+)</name>
        <dbReference type="ChEBI" id="CHEBI:18420"/>
    </ligand>
</feature>
<feature type="binding site" evidence="1">
    <location>
        <position position="119"/>
    </location>
    <ligand>
        <name>[2Fe-2S] cluster</name>
        <dbReference type="ChEBI" id="CHEBI:190135"/>
    </ligand>
</feature>
<feature type="binding site" evidence="1">
    <location>
        <position position="120"/>
    </location>
    <ligand>
        <name>Mg(2+)</name>
        <dbReference type="ChEBI" id="CHEBI:18420"/>
    </ligand>
</feature>
<feature type="binding site" description="via carbamate group" evidence="1">
    <location>
        <position position="121"/>
    </location>
    <ligand>
        <name>Mg(2+)</name>
        <dbReference type="ChEBI" id="CHEBI:18420"/>
    </ligand>
</feature>
<feature type="binding site" evidence="1">
    <location>
        <position position="191"/>
    </location>
    <ligand>
        <name>[2Fe-2S] cluster</name>
        <dbReference type="ChEBI" id="CHEBI:190135"/>
    </ligand>
</feature>
<feature type="binding site" evidence="1">
    <location>
        <position position="440"/>
    </location>
    <ligand>
        <name>Mg(2+)</name>
        <dbReference type="ChEBI" id="CHEBI:18420"/>
    </ligand>
</feature>
<feature type="modified residue" description="N6-carboxylysine" evidence="1">
    <location>
        <position position="121"/>
    </location>
</feature>
<accession>A9A6N6</accession>
<dbReference type="EC" id="4.2.1.9" evidence="1"/>
<dbReference type="EMBL" id="CP000867">
    <property type="protein sequence ID" value="ABX01450.1"/>
    <property type="molecule type" value="Genomic_DNA"/>
</dbReference>
<dbReference type="SMR" id="A9A6N6"/>
<dbReference type="STRING" id="444158.MmarC6_0633"/>
<dbReference type="KEGG" id="mmx:MmarC6_0633"/>
<dbReference type="eggNOG" id="arCOG04045">
    <property type="taxonomic scope" value="Archaea"/>
</dbReference>
<dbReference type="HOGENOM" id="CLU_014271_4_2_2"/>
<dbReference type="OrthoDB" id="8674at2157"/>
<dbReference type="PhylomeDB" id="A9A6N6"/>
<dbReference type="UniPathway" id="UPA00047">
    <property type="reaction ID" value="UER00057"/>
</dbReference>
<dbReference type="UniPathway" id="UPA00049">
    <property type="reaction ID" value="UER00061"/>
</dbReference>
<dbReference type="GO" id="GO:0005829">
    <property type="term" value="C:cytosol"/>
    <property type="evidence" value="ECO:0007669"/>
    <property type="project" value="TreeGrafter"/>
</dbReference>
<dbReference type="GO" id="GO:0051537">
    <property type="term" value="F:2 iron, 2 sulfur cluster binding"/>
    <property type="evidence" value="ECO:0007669"/>
    <property type="project" value="UniProtKB-UniRule"/>
</dbReference>
<dbReference type="GO" id="GO:0004160">
    <property type="term" value="F:dihydroxy-acid dehydratase activity"/>
    <property type="evidence" value="ECO:0007669"/>
    <property type="project" value="UniProtKB-UniRule"/>
</dbReference>
<dbReference type="GO" id="GO:0000287">
    <property type="term" value="F:magnesium ion binding"/>
    <property type="evidence" value="ECO:0007669"/>
    <property type="project" value="UniProtKB-UniRule"/>
</dbReference>
<dbReference type="GO" id="GO:0009097">
    <property type="term" value="P:isoleucine biosynthetic process"/>
    <property type="evidence" value="ECO:0007669"/>
    <property type="project" value="UniProtKB-UniRule"/>
</dbReference>
<dbReference type="GO" id="GO:0009099">
    <property type="term" value="P:L-valine biosynthetic process"/>
    <property type="evidence" value="ECO:0007669"/>
    <property type="project" value="UniProtKB-UniRule"/>
</dbReference>
<dbReference type="FunFam" id="3.50.30.80:FF:000001">
    <property type="entry name" value="Dihydroxy-acid dehydratase"/>
    <property type="match status" value="1"/>
</dbReference>
<dbReference type="Gene3D" id="3.50.30.80">
    <property type="entry name" value="IlvD/EDD C-terminal domain-like"/>
    <property type="match status" value="1"/>
</dbReference>
<dbReference type="HAMAP" id="MF_00012">
    <property type="entry name" value="IlvD"/>
    <property type="match status" value="1"/>
</dbReference>
<dbReference type="InterPro" id="IPR042096">
    <property type="entry name" value="Dihydro-acid_dehy_C"/>
</dbReference>
<dbReference type="InterPro" id="IPR004404">
    <property type="entry name" value="DihydroxyA_deHydtase"/>
</dbReference>
<dbReference type="InterPro" id="IPR020558">
    <property type="entry name" value="DiOHA_6PGluconate_deHydtase_CS"/>
</dbReference>
<dbReference type="InterPro" id="IPR056740">
    <property type="entry name" value="ILV_EDD_C"/>
</dbReference>
<dbReference type="InterPro" id="IPR000581">
    <property type="entry name" value="ILV_EDD_N"/>
</dbReference>
<dbReference type="InterPro" id="IPR037237">
    <property type="entry name" value="IlvD/EDD_N"/>
</dbReference>
<dbReference type="NCBIfam" id="TIGR00110">
    <property type="entry name" value="ilvD"/>
    <property type="match status" value="1"/>
</dbReference>
<dbReference type="NCBIfam" id="NF002068">
    <property type="entry name" value="PRK00911.1"/>
    <property type="match status" value="1"/>
</dbReference>
<dbReference type="PANTHER" id="PTHR43661">
    <property type="entry name" value="D-XYLONATE DEHYDRATASE"/>
    <property type="match status" value="1"/>
</dbReference>
<dbReference type="PANTHER" id="PTHR43661:SF3">
    <property type="entry name" value="D-XYLONATE DEHYDRATASE YAGF-RELATED"/>
    <property type="match status" value="1"/>
</dbReference>
<dbReference type="Pfam" id="PF24877">
    <property type="entry name" value="ILV_EDD_C"/>
    <property type="match status" value="1"/>
</dbReference>
<dbReference type="Pfam" id="PF00920">
    <property type="entry name" value="ILVD_EDD_N"/>
    <property type="match status" value="1"/>
</dbReference>
<dbReference type="SUPFAM" id="SSF143975">
    <property type="entry name" value="IlvD/EDD N-terminal domain-like"/>
    <property type="match status" value="1"/>
</dbReference>
<dbReference type="SUPFAM" id="SSF52016">
    <property type="entry name" value="LeuD/IlvD-like"/>
    <property type="match status" value="1"/>
</dbReference>
<dbReference type="PROSITE" id="PS00886">
    <property type="entry name" value="ILVD_EDD_1"/>
    <property type="match status" value="1"/>
</dbReference>
<dbReference type="PROSITE" id="PS00887">
    <property type="entry name" value="ILVD_EDD_2"/>
    <property type="match status" value="1"/>
</dbReference>
<comment type="function">
    <text evidence="1">Functions in the biosynthesis of branched-chain amino acids. Catalyzes the dehydration of (2R,3R)-2,3-dihydroxy-3-methylpentanoate (2,3-dihydroxy-3-methylvalerate) into 2-oxo-3-methylpentanoate (2-oxo-3-methylvalerate) and of (2R)-2,3-dihydroxy-3-methylbutanoate (2,3-dihydroxyisovalerate) into 2-oxo-3-methylbutanoate (2-oxoisovalerate), the penultimate precursor to L-isoleucine and L-valine, respectively.</text>
</comment>
<comment type="catalytic activity">
    <reaction evidence="1">
        <text>(2R)-2,3-dihydroxy-3-methylbutanoate = 3-methyl-2-oxobutanoate + H2O</text>
        <dbReference type="Rhea" id="RHEA:24809"/>
        <dbReference type="ChEBI" id="CHEBI:11851"/>
        <dbReference type="ChEBI" id="CHEBI:15377"/>
        <dbReference type="ChEBI" id="CHEBI:49072"/>
        <dbReference type="EC" id="4.2.1.9"/>
    </reaction>
    <physiologicalReaction direction="left-to-right" evidence="1">
        <dbReference type="Rhea" id="RHEA:24810"/>
    </physiologicalReaction>
</comment>
<comment type="catalytic activity">
    <reaction evidence="1">
        <text>(2R,3R)-2,3-dihydroxy-3-methylpentanoate = (S)-3-methyl-2-oxopentanoate + H2O</text>
        <dbReference type="Rhea" id="RHEA:27694"/>
        <dbReference type="ChEBI" id="CHEBI:15377"/>
        <dbReference type="ChEBI" id="CHEBI:35146"/>
        <dbReference type="ChEBI" id="CHEBI:49258"/>
        <dbReference type="EC" id="4.2.1.9"/>
    </reaction>
    <physiologicalReaction direction="left-to-right" evidence="1">
        <dbReference type="Rhea" id="RHEA:27695"/>
    </physiologicalReaction>
</comment>
<comment type="cofactor">
    <cofactor evidence="1">
        <name>[2Fe-2S] cluster</name>
        <dbReference type="ChEBI" id="CHEBI:190135"/>
    </cofactor>
    <text evidence="1">Binds 1 [2Fe-2S] cluster per subunit. This cluster acts as a Lewis acid cofactor.</text>
</comment>
<comment type="cofactor">
    <cofactor evidence="1">
        <name>Mg(2+)</name>
        <dbReference type="ChEBI" id="CHEBI:18420"/>
    </cofactor>
</comment>
<comment type="pathway">
    <text evidence="1">Amino-acid biosynthesis; L-isoleucine biosynthesis; L-isoleucine from 2-oxobutanoate: step 3/4.</text>
</comment>
<comment type="pathway">
    <text evidence="1">Amino-acid biosynthesis; L-valine biosynthesis; L-valine from pyruvate: step 3/4.</text>
</comment>
<comment type="subunit">
    <text evidence="1">Homodimer.</text>
</comment>
<comment type="similarity">
    <text evidence="1">Belongs to the IlvD/Edd family.</text>
</comment>
<proteinExistence type="inferred from homology"/>
<gene>
    <name evidence="1" type="primary">ilvD</name>
    <name type="ordered locus">MmarC6_0633</name>
</gene>